<gene>
    <name evidence="4" type="primary">RXLR131</name>
</gene>
<accession>P0CU91</accession>
<organism>
    <name type="scientific">Plasmopara viticola</name>
    <name type="common">Downy mildew of grapevine</name>
    <name type="synonym">Botrytis viticola</name>
    <dbReference type="NCBI Taxonomy" id="143451"/>
    <lineage>
        <taxon>Eukaryota</taxon>
        <taxon>Sar</taxon>
        <taxon>Stramenopiles</taxon>
        <taxon>Oomycota</taxon>
        <taxon>Peronosporales</taxon>
        <taxon>Peronosporaceae</taxon>
        <taxon>Plasmopara</taxon>
    </lineage>
</organism>
<feature type="signal peptide" evidence="1">
    <location>
        <begin position="1"/>
        <end position="20"/>
    </location>
</feature>
<feature type="chain" id="PRO_0000447964" description="Secreted RxLR effector protein 131" evidence="1">
    <location>
        <begin position="21"/>
        <end position="158"/>
    </location>
</feature>
<feature type="transmembrane region" description="Helical" evidence="1">
    <location>
        <begin position="127"/>
        <end position="147"/>
    </location>
</feature>
<feature type="region of interest" description="Host BKI1-binding" evidence="3">
    <location>
        <begin position="120"/>
        <end position="158"/>
    </location>
</feature>
<feature type="short sequence motif" description="RxLR-dEER" evidence="6">
    <location>
        <begin position="39"/>
        <end position="57"/>
    </location>
</feature>
<feature type="glycosylation site" description="N-linked (GlcNAc...) asparagine" evidence="2">
    <location>
        <position position="150"/>
    </location>
</feature>
<reference key="1">
    <citation type="journal article" date="2019" name="Mol. Plant Pathol.">
        <title>Plasmopara viticola effector PvRXLR131 suppresses plant immunity by targeting plant receptor-like kinase inhibitor BKI1.</title>
        <authorList>
            <person name="Lan X."/>
            <person name="Liu Y."/>
            <person name="Song S."/>
            <person name="Yin L."/>
            <person name="Xiang J."/>
            <person name="Qu J."/>
            <person name="Lu J."/>
        </authorList>
    </citation>
    <scope>DOMAIN</scope>
    <scope>INDUCTION</scope>
    <scope>SUBCELLULAR LOCATION</scope>
    <scope>FUNCTION</scope>
    <scope>INTERACTION WITH HOST BKI1</scope>
</reference>
<protein>
    <recommendedName>
        <fullName evidence="4">Secreted RxLR effector protein 131</fullName>
    </recommendedName>
</protein>
<dbReference type="SMR" id="P0CU91"/>
<dbReference type="GlyCosmos" id="P0CU91">
    <property type="glycosylation" value="1 site, No reported glycans"/>
</dbReference>
<dbReference type="GO" id="GO:0005576">
    <property type="term" value="C:extracellular region"/>
    <property type="evidence" value="ECO:0007669"/>
    <property type="project" value="UniProtKB-SubCell"/>
</dbReference>
<dbReference type="GO" id="GO:0020002">
    <property type="term" value="C:host cell plasma membrane"/>
    <property type="evidence" value="ECO:0007669"/>
    <property type="project" value="UniProtKB-SubCell"/>
</dbReference>
<dbReference type="GO" id="GO:0016020">
    <property type="term" value="C:membrane"/>
    <property type="evidence" value="ECO:0007669"/>
    <property type="project" value="UniProtKB-KW"/>
</dbReference>
<proteinExistence type="evidence at protein level"/>
<evidence type="ECO:0000255" key="1"/>
<evidence type="ECO:0000255" key="2">
    <source>
        <dbReference type="PROSITE-ProRule" id="PRU00498"/>
    </source>
</evidence>
<evidence type="ECO:0000269" key="3">
    <source>
    </source>
</evidence>
<evidence type="ECO:0000303" key="4">
    <source>
    </source>
</evidence>
<evidence type="ECO:0000305" key="5"/>
<evidence type="ECO:0000305" key="6">
    <source>
    </source>
</evidence>
<keyword id="KW-0325">Glycoprotein</keyword>
<keyword id="KW-1032">Host cell membrane</keyword>
<keyword id="KW-1043">Host membrane</keyword>
<keyword id="KW-0472">Membrane</keyword>
<keyword id="KW-0964">Secreted</keyword>
<keyword id="KW-0732">Signal</keyword>
<keyword id="KW-0812">Transmembrane</keyword>
<keyword id="KW-1133">Transmembrane helix</keyword>
<keyword id="KW-0843">Virulence</keyword>
<sequence length="158" mass="17096">MRQIPLVVVLLLAYAARLQGLISVTNAAVGAKPGPHAGRDLDGSTTSMSVNVDDEERGLSDMLKRLRSMLFDANSATKGQALKKDAKSTKSVKAAGAASNAKKVGQLRHMWNQIKNVEYKGNVKYLAIIYVICILSVLGILGTVFAINRNISNQYIHE</sequence>
<comment type="function">
    <text evidence="3">Secreted effector that suppresses pathogen-associated molecular pattern (PAMP)-triggered immunity (PTI) in host plants (PubMed:30945786). Suppresses both defense-related brassinosteroid (BR) and ERECTA (ER) signaling pathways in planta by interacting with host BRI1 kinase inhibitor 1 (BKI1) at the host plasma membrane, leading to a host dwarf phenotype (PubMed:30945786).</text>
</comment>
<comment type="subunit">
    <text evidence="3">Interacts with host BKI1.</text>
</comment>
<comment type="subcellular location">
    <subcellularLocation>
        <location evidence="3">Secreted</location>
    </subcellularLocation>
    <subcellularLocation>
        <location evidence="3">Host cell membrane</location>
        <topology evidence="1">Single-pass type I membrane protein</topology>
    </subcellularLocation>
</comment>
<comment type="induction">
    <text evidence="3">Expression is induced during infection of host grapevine.</text>
</comment>
<comment type="domain">
    <text evidence="6">The RxLR-dEER motif acts to carry the protein into the host cell cytoplasm through binding to cell surface phosphatidylinositol-3-phosphate.</text>
</comment>
<comment type="domain">
    <text evidence="3">The 39 amino acids in the C-terminus (residues 120 to 158) are sufficient for binding the host BKI1.</text>
</comment>
<comment type="similarity">
    <text evidence="5">Belongs to the RxLR effector family.</text>
</comment>
<name>RL131_PLAVT</name>